<reference key="1">
    <citation type="journal article" date="2004" name="Nat. Genet.">
        <title>Complete sequencing and characterization of 21,243 full-length human cDNAs.</title>
        <authorList>
            <person name="Ota T."/>
            <person name="Suzuki Y."/>
            <person name="Nishikawa T."/>
            <person name="Otsuki T."/>
            <person name="Sugiyama T."/>
            <person name="Irie R."/>
            <person name="Wakamatsu A."/>
            <person name="Hayashi K."/>
            <person name="Sato H."/>
            <person name="Nagai K."/>
            <person name="Kimura K."/>
            <person name="Makita H."/>
            <person name="Sekine M."/>
            <person name="Obayashi M."/>
            <person name="Nishi T."/>
            <person name="Shibahara T."/>
            <person name="Tanaka T."/>
            <person name="Ishii S."/>
            <person name="Yamamoto J."/>
            <person name="Saito K."/>
            <person name="Kawai Y."/>
            <person name="Isono Y."/>
            <person name="Nakamura Y."/>
            <person name="Nagahari K."/>
            <person name="Murakami K."/>
            <person name="Yasuda T."/>
            <person name="Iwayanagi T."/>
            <person name="Wagatsuma M."/>
            <person name="Shiratori A."/>
            <person name="Sudo H."/>
            <person name="Hosoiri T."/>
            <person name="Kaku Y."/>
            <person name="Kodaira H."/>
            <person name="Kondo H."/>
            <person name="Sugawara M."/>
            <person name="Takahashi M."/>
            <person name="Kanda K."/>
            <person name="Yokoi T."/>
            <person name="Furuya T."/>
            <person name="Kikkawa E."/>
            <person name="Omura Y."/>
            <person name="Abe K."/>
            <person name="Kamihara K."/>
            <person name="Katsuta N."/>
            <person name="Sato K."/>
            <person name="Tanikawa M."/>
            <person name="Yamazaki M."/>
            <person name="Ninomiya K."/>
            <person name="Ishibashi T."/>
            <person name="Yamashita H."/>
            <person name="Murakawa K."/>
            <person name="Fujimori K."/>
            <person name="Tanai H."/>
            <person name="Kimata M."/>
            <person name="Watanabe M."/>
            <person name="Hiraoka S."/>
            <person name="Chiba Y."/>
            <person name="Ishida S."/>
            <person name="Ono Y."/>
            <person name="Takiguchi S."/>
            <person name="Watanabe S."/>
            <person name="Yosida M."/>
            <person name="Hotuta T."/>
            <person name="Kusano J."/>
            <person name="Kanehori K."/>
            <person name="Takahashi-Fujii A."/>
            <person name="Hara H."/>
            <person name="Tanase T.-O."/>
            <person name="Nomura Y."/>
            <person name="Togiya S."/>
            <person name="Komai F."/>
            <person name="Hara R."/>
            <person name="Takeuchi K."/>
            <person name="Arita M."/>
            <person name="Imose N."/>
            <person name="Musashino K."/>
            <person name="Yuuki H."/>
            <person name="Oshima A."/>
            <person name="Sasaki N."/>
            <person name="Aotsuka S."/>
            <person name="Yoshikawa Y."/>
            <person name="Matsunawa H."/>
            <person name="Ichihara T."/>
            <person name="Shiohata N."/>
            <person name="Sano S."/>
            <person name="Moriya S."/>
            <person name="Momiyama H."/>
            <person name="Satoh N."/>
            <person name="Takami S."/>
            <person name="Terashima Y."/>
            <person name="Suzuki O."/>
            <person name="Nakagawa S."/>
            <person name="Senoh A."/>
            <person name="Mizoguchi H."/>
            <person name="Goto Y."/>
            <person name="Shimizu F."/>
            <person name="Wakebe H."/>
            <person name="Hishigaki H."/>
            <person name="Watanabe T."/>
            <person name="Sugiyama A."/>
            <person name="Takemoto M."/>
            <person name="Kawakami B."/>
            <person name="Yamazaki M."/>
            <person name="Watanabe K."/>
            <person name="Kumagai A."/>
            <person name="Itakura S."/>
            <person name="Fukuzumi Y."/>
            <person name="Fujimori Y."/>
            <person name="Komiyama M."/>
            <person name="Tashiro H."/>
            <person name="Tanigami A."/>
            <person name="Fujiwara T."/>
            <person name="Ono T."/>
            <person name="Yamada K."/>
            <person name="Fujii Y."/>
            <person name="Ozaki K."/>
            <person name="Hirao M."/>
            <person name="Ohmori Y."/>
            <person name="Kawabata A."/>
            <person name="Hikiji T."/>
            <person name="Kobatake N."/>
            <person name="Inagaki H."/>
            <person name="Ikema Y."/>
            <person name="Okamoto S."/>
            <person name="Okitani R."/>
            <person name="Kawakami T."/>
            <person name="Noguchi S."/>
            <person name="Itoh T."/>
            <person name="Shigeta K."/>
            <person name="Senba T."/>
            <person name="Matsumura K."/>
            <person name="Nakajima Y."/>
            <person name="Mizuno T."/>
            <person name="Morinaga M."/>
            <person name="Sasaki M."/>
            <person name="Togashi T."/>
            <person name="Oyama M."/>
            <person name="Hata H."/>
            <person name="Watanabe M."/>
            <person name="Komatsu T."/>
            <person name="Mizushima-Sugano J."/>
            <person name="Satoh T."/>
            <person name="Shirai Y."/>
            <person name="Takahashi Y."/>
            <person name="Nakagawa K."/>
            <person name="Okumura K."/>
            <person name="Nagase T."/>
            <person name="Nomura N."/>
            <person name="Kikuchi H."/>
            <person name="Masuho Y."/>
            <person name="Yamashita R."/>
            <person name="Nakai K."/>
            <person name="Yada T."/>
            <person name="Nakamura Y."/>
            <person name="Ohara O."/>
            <person name="Isogai T."/>
            <person name="Sugano S."/>
        </authorList>
    </citation>
    <scope>NUCLEOTIDE SEQUENCE [LARGE SCALE MRNA] (ISOFORM 2)</scope>
    <source>
        <tissue>Testis</tissue>
    </source>
</reference>
<reference key="2">
    <citation type="journal article" date="2004" name="Genome Res.">
        <title>The status, quality, and expansion of the NIH full-length cDNA project: the Mammalian Gene Collection (MGC).</title>
        <authorList>
            <consortium name="The MGC Project Team"/>
        </authorList>
    </citation>
    <scope>NUCLEOTIDE SEQUENCE [LARGE SCALE MRNA] (ISOFORM 2)</scope>
    <scope>NUCLEOTIDE SEQUENCE [LARGE SCALE MRNA] OF 123-668 (ISOFORM 1)</scope>
    <scope>VARIANTS ARG-267 AND ARG-500</scope>
    <source>
        <tissue>Lung</tissue>
        <tissue>Mammary gland</tissue>
    </source>
</reference>
<reference key="3">
    <citation type="journal article" date="1993" name="J. Immunol.">
        <title>Identification of human pre-T/NK cell-associated genes.</title>
        <authorList>
            <person name="Ranes-Goldberg M.G."/>
            <person name="Hori T."/>
            <person name="Mohan-Peterson S."/>
            <person name="Spits H."/>
        </authorList>
    </citation>
    <scope>IDENTIFICATION</scope>
</reference>
<reference key="4">
    <citation type="journal article" date="2009" name="Sci. Signal.">
        <title>Quantitative phosphoproteomic analysis of T cell receptor signaling reveals system-wide modulation of protein-protein interactions.</title>
        <authorList>
            <person name="Mayya V."/>
            <person name="Lundgren D.H."/>
            <person name="Hwang S.-I."/>
            <person name="Rezaul K."/>
            <person name="Wu L."/>
            <person name="Eng J.K."/>
            <person name="Rodionov V."/>
            <person name="Han D.K."/>
        </authorList>
    </citation>
    <scope>PHOSPHORYLATION [LARGE SCALE ANALYSIS] AT SER-370</scope>
    <scope>IDENTIFICATION BY MASS SPECTROMETRY [LARGE SCALE ANALYSIS]</scope>
    <source>
        <tissue>Leukemic T-cell</tissue>
    </source>
</reference>
<reference key="5">
    <citation type="journal article" date="2013" name="J. Proteome Res.">
        <title>Toward a comprehensive characterization of a human cancer cell phosphoproteome.</title>
        <authorList>
            <person name="Zhou H."/>
            <person name="Di Palma S."/>
            <person name="Preisinger C."/>
            <person name="Peng M."/>
            <person name="Polat A.N."/>
            <person name="Heck A.J."/>
            <person name="Mohammed S."/>
        </authorList>
    </citation>
    <scope>PHOSPHORYLATION [LARGE SCALE ANALYSIS] AT SER-370</scope>
    <scope>IDENTIFICATION BY MASS SPECTROMETRY [LARGE SCALE ANALYSIS]</scope>
    <source>
        <tissue>Cervix carcinoma</tissue>
        <tissue>Erythroleukemia</tissue>
    </source>
</reference>
<gene>
    <name evidence="7" type="primary">BRME1</name>
    <name type="synonym">C19orf57</name>
</gene>
<comment type="function">
    <text evidence="1">Meiotic recombination factor component of recombination bridges involved in meiotic double-strand break repair. Modulates the localization of recombinases DMC1:RAD51 to meiotic double-strand break (DSB) sites through the interaction with and stabilization of the BRCA2:HSF2BP complex during meiotic recombination. Indispensable for the DSB repair, homologous synapsis, and crossover formation that are needed for progression past metaphase I, is essential for spermatogenesis and male fertility.</text>
</comment>
<comment type="subunit">
    <text evidence="1">Interacts with HSF2BP (via N-terminus) and BRCA2; the interaction with HSF2BP is direct and allows the formation of a ternary complex. The complex BRME1:HSF2BP:BRCA2 interacts with SPATA22, MEIOB and RAD51.</text>
</comment>
<comment type="interaction">
    <interactant intactId="EBI-741210">
        <id>Q0VDD7</id>
    </interactant>
    <interactant intactId="EBI-745226">
        <id>Q13155</id>
        <label>AIMP2</label>
    </interactant>
    <organismsDiffer>false</organismsDiffer>
    <experiments>8</experiments>
</comment>
<comment type="interaction">
    <interactant intactId="EBI-741210">
        <id>Q0VDD7</id>
    </interactant>
    <interactant intactId="EBI-2837444">
        <id>Q8WUW1</id>
        <label>BRK1</label>
    </interactant>
    <organismsDiffer>false</organismsDiffer>
    <experiments>3</experiments>
</comment>
<comment type="interaction">
    <interactant intactId="EBI-741210">
        <id>Q0VDD7</id>
    </interactant>
    <interactant intactId="EBI-356507">
        <id>P50990</id>
        <label>CCT8</label>
    </interactant>
    <organismsDiffer>false</organismsDiffer>
    <experiments>3</experiments>
</comment>
<comment type="interaction">
    <interactant intactId="EBI-741210">
        <id>Q0VDD7</id>
    </interactant>
    <interactant intactId="EBI-742413">
        <id>Q9BT78</id>
        <label>COPS4</label>
    </interactant>
    <organismsDiffer>false</organismsDiffer>
    <experiments>2</experiments>
</comment>
<comment type="interaction">
    <interactant intactId="EBI-741210">
        <id>Q0VDD7</id>
    </interactant>
    <interactant intactId="EBI-514206">
        <id>Q9UBT7</id>
        <label>CTNNAL1</label>
    </interactant>
    <organismsDiffer>false</organismsDiffer>
    <experiments>3</experiments>
</comment>
<comment type="interaction">
    <interactant intactId="EBI-741210">
        <id>Q0VDD7</id>
    </interactant>
    <interactant intactId="EBI-10175124">
        <id>Q8IZU0</id>
        <label>FAM9B</label>
    </interactant>
    <organismsDiffer>false</organismsDiffer>
    <experiments>3</experiments>
</comment>
<comment type="interaction">
    <interactant intactId="EBI-741210">
        <id>Q0VDD7</id>
    </interactant>
    <interactant intactId="EBI-2558217">
        <id>Q68CZ6</id>
        <label>HAUS3</label>
    </interactant>
    <organismsDiffer>false</organismsDiffer>
    <experiments>3</experiments>
</comment>
<comment type="interaction">
    <interactant intactId="EBI-741210">
        <id>Q0VDD7</id>
    </interactant>
    <interactant intactId="EBI-746815">
        <id>Q86YM7</id>
        <label>HOMER1</label>
    </interactant>
    <organismsDiffer>false</organismsDiffer>
    <experiments>3</experiments>
</comment>
<comment type="interaction">
    <interactant intactId="EBI-741210">
        <id>Q0VDD7</id>
    </interactant>
    <interactant intactId="EBI-10975473">
        <id>O60333-2</id>
        <label>KIF1B</label>
    </interactant>
    <organismsDiffer>false</organismsDiffer>
    <experiments>3</experiments>
</comment>
<comment type="interaction">
    <interactant intactId="EBI-741210">
        <id>Q0VDD7</id>
    </interactant>
    <interactant intactId="EBI-1047263">
        <id>O76015</id>
        <label>KRT38</label>
    </interactant>
    <organismsDiffer>false</organismsDiffer>
    <experiments>3</experiments>
</comment>
<comment type="interaction">
    <interactant intactId="EBI-741210">
        <id>Q0VDD7</id>
    </interactant>
    <interactant intactId="EBI-10171697">
        <id>Q6A162</id>
        <label>KRT40</label>
    </interactant>
    <organismsDiffer>false</organismsDiffer>
    <experiments>3</experiments>
</comment>
<comment type="interaction">
    <interactant intactId="EBI-741210">
        <id>Q0VDD7</id>
    </interactant>
    <interactant intactId="EBI-10172290">
        <id>P60409</id>
        <label>KRTAP10-7</label>
    </interactant>
    <organismsDiffer>false</organismsDiffer>
    <experiments>3</experiments>
</comment>
<comment type="interaction">
    <interactant intactId="EBI-741210">
        <id>Q0VDD7</id>
    </interactant>
    <interactant intactId="EBI-10172052">
        <id>P60411</id>
        <label>KRTAP10-9</label>
    </interactant>
    <organismsDiffer>false</organismsDiffer>
    <experiments>4</experiments>
</comment>
<comment type="interaction">
    <interactant intactId="EBI-741210">
        <id>Q0VDD7</id>
    </interactant>
    <interactant intactId="EBI-6190702">
        <id>P28331-2</id>
        <label>NDUFS1</label>
    </interactant>
    <organismsDiffer>false</organismsDiffer>
    <experiments>3</experiments>
</comment>
<comment type="interaction">
    <interactant intactId="EBI-741210">
        <id>Q0VDD7</id>
    </interactant>
    <interactant intactId="EBI-2811583">
        <id>Q9BVL2</id>
        <label>NUP58</label>
    </interactant>
    <organismsDiffer>false</organismsDiffer>
    <experiments>3</experiments>
</comment>
<comment type="interaction">
    <interactant intactId="EBI-741210">
        <id>Q0VDD7</id>
    </interactant>
    <interactant intactId="EBI-357793">
        <id>P60900</id>
        <label>PSMA6</label>
    </interactant>
    <organismsDiffer>false</organismsDiffer>
    <experiments>3</experiments>
</comment>
<comment type="interaction">
    <interactant intactId="EBI-741210">
        <id>Q0VDD7</id>
    </interactant>
    <interactant intactId="EBI-10224192">
        <id>Q06455-4</id>
        <label>RUNX1T1</label>
    </interactant>
    <organismsDiffer>false</organismsDiffer>
    <experiments>3</experiments>
</comment>
<comment type="interaction">
    <interactant intactId="EBI-741210">
        <id>Q0VDD7</id>
    </interactant>
    <interactant intactId="EBI-960169">
        <id>P61764</id>
        <label>STXBP1</label>
    </interactant>
    <organismsDiffer>false</organismsDiffer>
    <experiments>3</experiments>
</comment>
<comment type="interaction">
    <interactant intactId="EBI-741210">
        <id>Q0VDD7</id>
    </interactant>
    <interactant intactId="EBI-740098">
        <id>P36406</id>
        <label>TRIM23</label>
    </interactant>
    <organismsDiffer>false</organismsDiffer>
    <experiments>4</experiments>
</comment>
<comment type="interaction">
    <interactant intactId="EBI-741210">
        <id>Q0VDD7</id>
    </interactant>
    <interactant intactId="EBI-10294415">
        <id>Q99576-3</id>
        <label>TSC22D3</label>
    </interactant>
    <organismsDiffer>false</organismsDiffer>
    <experiments>3</experiments>
</comment>
<comment type="interaction">
    <interactant intactId="EBI-741210">
        <id>Q0VDD7</id>
    </interactant>
    <interactant intactId="EBI-711909">
        <id>P02766</id>
        <label>TTR</label>
    </interactant>
    <organismsDiffer>false</organismsDiffer>
    <experiments>3</experiments>
</comment>
<comment type="interaction">
    <interactant intactId="EBI-741210">
        <id>Q0VDD7</id>
    </interactant>
    <interactant intactId="EBI-720609">
        <id>O76024</id>
        <label>WFS1</label>
    </interactant>
    <organismsDiffer>false</organismsDiffer>
    <experiments>3</experiments>
</comment>
<comment type="interaction">
    <interactant intactId="EBI-12040255">
        <id>Q0VDD7-2</id>
    </interactant>
    <interactant intactId="EBI-10173507">
        <id>Q6UY14-3</id>
        <label>ADAMTSL4</label>
    </interactant>
    <organismsDiffer>false</organismsDiffer>
    <experiments>3</experiments>
</comment>
<comment type="interaction">
    <interactant intactId="EBI-12040255">
        <id>Q0VDD7-2</id>
    </interactant>
    <interactant intactId="EBI-3867333">
        <id>A8MQ03</id>
        <label>CYSRT1</label>
    </interactant>
    <organismsDiffer>false</organismsDiffer>
    <experiments>3</experiments>
</comment>
<comment type="interaction">
    <interactant intactId="EBI-12040255">
        <id>Q0VDD7-2</id>
    </interactant>
    <interactant intactId="EBI-948001">
        <id>Q15323</id>
        <label>KRT31</label>
    </interactant>
    <organismsDiffer>false</organismsDiffer>
    <experiments>3</experiments>
</comment>
<comment type="interaction">
    <interactant intactId="EBI-12040255">
        <id>Q0VDD7-2</id>
    </interactant>
    <interactant intactId="EBI-1047093">
        <id>O76011</id>
        <label>KRT34</label>
    </interactant>
    <organismsDiffer>false</organismsDiffer>
    <experiments>3</experiments>
</comment>
<comment type="interaction">
    <interactant intactId="EBI-12040255">
        <id>Q0VDD7-2</id>
    </interactant>
    <interactant intactId="EBI-10171774">
        <id>P60410</id>
        <label>KRTAP10-8</label>
    </interactant>
    <organismsDiffer>false</organismsDiffer>
    <experiments>3</experiments>
</comment>
<comment type="interaction">
    <interactant intactId="EBI-12040255">
        <id>Q0VDD7-2</id>
    </interactant>
    <interactant intactId="EBI-22310682">
        <id>P0DPK4</id>
        <label>NOTCH2NLC</label>
    </interactant>
    <organismsDiffer>false</organismsDiffer>
    <experiments>3</experiments>
</comment>
<comment type="subcellular location">
    <subcellularLocation>
        <location evidence="1">Chromosome</location>
    </subcellularLocation>
    <text evidence="1">During meiosis, recruited to chromosomes and localizes on recombination sites in a double-strand break-dependent manner. First appears on the chromosome axis at leptotene. Along with the progression of meiotic recombination, released from the axis to form bridge-like structures linking homolog axes before they are synapsed. Finally, located between synapsed homolog axes and on the synaptonemal complex (SC).</text>
</comment>
<comment type="alternative products">
    <event type="alternative splicing"/>
    <isoform>
        <id>Q0VDD7-1</id>
        <name>1</name>
        <sequence type="displayed"/>
    </isoform>
    <isoform>
        <id>Q0VDD7-2</id>
        <name>2</name>
        <sequence type="described" ref="VSP_027044"/>
    </isoform>
</comment>
<comment type="sequence caution" evidence="6">
    <conflict type="erroneous translation">
        <sequence resource="EMBL-CDS" id="AAB02340"/>
    </conflict>
    <text>Wrong choice of frame.</text>
</comment>
<accession>Q0VDD7</accession>
<accession>Q13411</accession>
<accession>Q8N825</accession>
<accession>Q96D63</accession>
<accession>Q9BU49</accession>
<sequence>MTKRKKLRTSGEGLCPPKPLKNPRLGDFYGDPQSSMLGCLHHPEEPEGKLGPVPSTQQHGEEPGKAVSSSPDEETGSPCRLLRQPEKEPAPLPPSQNSFGRFVPQFAKSRKTVTRKEEMKDEDRGSGAFSLETIAESSAQSPGCQLLVETLGVPLQEATELGDPTQADSARPEQSSQSPVQAVPGSGDSQPDDPPDRGTGLSASQRASQDHLSEQGADDSKPETDRVPGDGGQKEHLPSIDSEGEKPDRGAPQEGGAQRTAGAGLPGGPQEEGDGVPCTPASAPTSGPAPGLGPASWCLEPGSVAQGSPDPQQTPSRMGREGEGTHSSLGCSSLGMVVIADLSTDPTELEERALEVAGPDGQASAISPASPRRKAADGGHRRALPGCTSLTGETTGESGEAGQDGKPPGDVLVGPTASLALAPGSGESMMGAGDSGHASPDTGPCVNQKQEPGPAQEEAELGGQNLERDLEGFRVSPQASVVLEHREIADDPLQEPGAQQGIPDTTSELAGQRDHLPHSADQGTWADSLAVELDFLLDSQIQDALDASDFEAPPEQLFPSGNKPGPCWPGPSSHANGDPVAVAKAQPRTFVGIQASEASRMEDATNVVRGLIVELSNLNRLIMGTHRDLEAFKRLNYRKTKLGGKAPLPYPSKGPGNIPRGDPPWREL</sequence>
<name>BRME1_HUMAN</name>
<feature type="chain" id="PRO_0000295737" description="Break repair meiotic recombinase recruitment factor 1">
    <location>
        <begin position="1"/>
        <end position="668"/>
    </location>
</feature>
<feature type="region of interest" description="Disordered" evidence="2">
    <location>
        <begin position="1"/>
        <end position="142"/>
    </location>
</feature>
<feature type="region of interest" description="Disordered" evidence="2">
    <location>
        <begin position="155"/>
        <end position="333"/>
    </location>
</feature>
<feature type="region of interest" description="Disordered" evidence="2">
    <location>
        <begin position="349"/>
        <end position="465"/>
    </location>
</feature>
<feature type="region of interest" description="Disordered" evidence="2">
    <location>
        <begin position="482"/>
        <end position="521"/>
    </location>
</feature>
<feature type="region of interest" description="Disordered" evidence="2">
    <location>
        <begin position="642"/>
        <end position="668"/>
    </location>
</feature>
<feature type="compositionally biased region" description="Basic and acidic residues" evidence="2">
    <location>
        <begin position="114"/>
        <end position="125"/>
    </location>
</feature>
<feature type="compositionally biased region" description="Polar residues" evidence="2">
    <location>
        <begin position="166"/>
        <end position="180"/>
    </location>
</feature>
<feature type="compositionally biased region" description="Basic and acidic residues" evidence="2">
    <location>
        <begin position="208"/>
        <end position="251"/>
    </location>
</feature>
<feature type="compositionally biased region" description="Low complexity" evidence="2">
    <location>
        <begin position="279"/>
        <end position="296"/>
    </location>
</feature>
<feature type="compositionally biased region" description="Polar residues" evidence="2">
    <location>
        <begin position="305"/>
        <end position="316"/>
    </location>
</feature>
<feature type="compositionally biased region" description="Low complexity" evidence="2">
    <location>
        <begin position="391"/>
        <end position="400"/>
    </location>
</feature>
<feature type="modified residue" description="Phosphoserine" evidence="8 9">
    <location>
        <position position="370"/>
    </location>
</feature>
<feature type="splice variant" id="VSP_027044" description="In isoform 2." evidence="4 5">
    <original>RTFVGIQASEASRMEDATNVVRGLIVELSNLN</original>
    <variation>S</variation>
    <location>
        <begin position="588"/>
        <end position="619"/>
    </location>
</feature>
<feature type="sequence variant" id="VAR_033356" description="In dbSNP:rs2305775." evidence="3">
    <original>G</original>
    <variation>R</variation>
    <location>
        <position position="267"/>
    </location>
</feature>
<feature type="sequence variant" id="VAR_033357" description="In dbSNP:rs3803892." evidence="3">
    <original>Q</original>
    <variation>R</variation>
    <location>
        <position position="500"/>
    </location>
</feature>
<feature type="sequence conflict" description="In Ref. 2; AAI19720." evidence="6" ref="2">
    <original>D</original>
    <variation>E</variation>
    <location>
        <position position="491"/>
    </location>
</feature>
<feature type="helix" evidence="10">
    <location>
        <begin position="605"/>
        <end position="639"/>
    </location>
</feature>
<dbReference type="EMBL" id="AK097431">
    <property type="protein sequence ID" value="BAC05049.1"/>
    <property type="molecule type" value="mRNA"/>
</dbReference>
<dbReference type="EMBL" id="BC002891">
    <property type="protein sequence ID" value="AAH02891.2"/>
    <property type="molecule type" value="mRNA"/>
</dbReference>
<dbReference type="EMBL" id="BC012945">
    <property type="protein sequence ID" value="AAH12945.2"/>
    <property type="molecule type" value="mRNA"/>
</dbReference>
<dbReference type="EMBL" id="BC119719">
    <property type="protein sequence ID" value="AAI19720.1"/>
    <property type="molecule type" value="mRNA"/>
</dbReference>
<dbReference type="EMBL" id="L17327">
    <property type="protein sequence ID" value="AAB02340.1"/>
    <property type="status" value="ALT_SEQ"/>
    <property type="molecule type" value="mRNA"/>
</dbReference>
<dbReference type="CCDS" id="CCDS12299.1">
    <molecule id="Q0VDD7-2"/>
</dbReference>
<dbReference type="CCDS" id="CCDS92536.1">
    <molecule id="Q0VDD7-1"/>
</dbReference>
<dbReference type="RefSeq" id="NP_001332772.2">
    <molecule id="Q0VDD7-1"/>
    <property type="nucleotide sequence ID" value="NM_001345843.2"/>
</dbReference>
<dbReference type="RefSeq" id="NP_001332773.2">
    <molecule id="Q0VDD7-2"/>
    <property type="nucleotide sequence ID" value="NM_001345844.2"/>
</dbReference>
<dbReference type="RefSeq" id="NP_001380574.1">
    <molecule id="Q0VDD7-1"/>
    <property type="nucleotide sequence ID" value="NM_001393645.1"/>
</dbReference>
<dbReference type="RefSeq" id="NP_001380575.1">
    <molecule id="Q0VDD7-1"/>
    <property type="nucleotide sequence ID" value="NM_001393646.1"/>
</dbReference>
<dbReference type="RefSeq" id="NP_077299.3">
    <molecule id="Q0VDD7-2"/>
    <property type="nucleotide sequence ID" value="NM_024323.4"/>
</dbReference>
<dbReference type="RefSeq" id="XP_047295386.1">
    <molecule id="Q0VDD7-2"/>
    <property type="nucleotide sequence ID" value="XM_047439430.1"/>
</dbReference>
<dbReference type="RefSeq" id="XP_054178114.1">
    <molecule id="Q0VDD7-2"/>
    <property type="nucleotide sequence ID" value="XM_054322139.1"/>
</dbReference>
<dbReference type="RefSeq" id="XP_054188695.1">
    <molecule id="Q0VDD7-2"/>
    <property type="nucleotide sequence ID" value="XM_054332720.1"/>
</dbReference>
<dbReference type="PDB" id="8A51">
    <property type="method" value="X-ray"/>
    <property type="resolution" value="1.90 A"/>
    <property type="chains" value="B=602-641"/>
</dbReference>
<dbReference type="PDBsum" id="8A51"/>
<dbReference type="SMR" id="Q0VDD7"/>
<dbReference type="BioGRID" id="122590">
    <property type="interactions" value="52"/>
</dbReference>
<dbReference type="FunCoup" id="Q0VDD7">
    <property type="interactions" value="27"/>
</dbReference>
<dbReference type="IntAct" id="Q0VDD7">
    <property type="interactions" value="45"/>
</dbReference>
<dbReference type="MINT" id="Q0VDD7"/>
<dbReference type="STRING" id="9606.ENSP00000254336"/>
<dbReference type="GlyGen" id="Q0VDD7">
    <property type="glycosylation" value="2 sites"/>
</dbReference>
<dbReference type="iPTMnet" id="Q0VDD7"/>
<dbReference type="PhosphoSitePlus" id="Q0VDD7"/>
<dbReference type="BioMuta" id="C19orf57"/>
<dbReference type="DMDM" id="158564134"/>
<dbReference type="jPOST" id="Q0VDD7"/>
<dbReference type="MassIVE" id="Q0VDD7"/>
<dbReference type="PaxDb" id="9606-ENSP00000254336"/>
<dbReference type="PeptideAtlas" id="Q0VDD7"/>
<dbReference type="ProteomicsDB" id="58818">
    <molecule id="Q0VDD7-1"/>
</dbReference>
<dbReference type="ProteomicsDB" id="58819">
    <molecule id="Q0VDD7-2"/>
</dbReference>
<dbReference type="Antibodypedia" id="50171">
    <property type="antibodies" value="39 antibodies from 13 providers"/>
</dbReference>
<dbReference type="DNASU" id="79173"/>
<dbReference type="Ensembl" id="ENST00000346736.6">
    <molecule id="Q0VDD7-2"/>
    <property type="protein sequence ID" value="ENSP00000254336.1"/>
    <property type="gene ID" value="ENSG00000132016.12"/>
</dbReference>
<dbReference type="Ensembl" id="ENST00000586783.6">
    <molecule id="Q0VDD7-1"/>
    <property type="protein sequence ID" value="ENSP00000465822.1"/>
    <property type="gene ID" value="ENSG00000132016.12"/>
</dbReference>
<dbReference type="Ensembl" id="ENST00000672170.1">
    <molecule id="Q0VDD7-1"/>
    <property type="protein sequence ID" value="ENSP00000500215.1"/>
    <property type="gene ID" value="ENSG00000288152.1"/>
</dbReference>
<dbReference type="Ensembl" id="ENST00000672786.1">
    <molecule id="Q0VDD7-2"/>
    <property type="protein sequence ID" value="ENSP00000500761.1"/>
    <property type="gene ID" value="ENSG00000288152.1"/>
</dbReference>
<dbReference type="GeneID" id="79173"/>
<dbReference type="KEGG" id="hsa:79173"/>
<dbReference type="MANE-Select" id="ENST00000586783.6">
    <property type="protein sequence ID" value="ENSP00000465822.1"/>
    <property type="RefSeq nucleotide sequence ID" value="NM_001345843.2"/>
    <property type="RefSeq protein sequence ID" value="NP_001332772.2"/>
</dbReference>
<dbReference type="UCSC" id="uc002mxk.2">
    <molecule id="Q0VDD7-1"/>
    <property type="organism name" value="human"/>
</dbReference>
<dbReference type="AGR" id="HGNC:28153"/>
<dbReference type="CTD" id="79173"/>
<dbReference type="DisGeNET" id="79173"/>
<dbReference type="GeneCards" id="BRME1"/>
<dbReference type="HGNC" id="HGNC:28153">
    <property type="gene designation" value="BRME1"/>
</dbReference>
<dbReference type="HPA" id="ENSG00000132016">
    <property type="expression patterns" value="Tissue enhanced (testis)"/>
</dbReference>
<dbReference type="MalaCards" id="BRME1"/>
<dbReference type="MIM" id="619276">
    <property type="type" value="gene"/>
</dbReference>
<dbReference type="neXtProt" id="NX_Q0VDD7"/>
<dbReference type="OpenTargets" id="ENSG00000132016"/>
<dbReference type="VEuPathDB" id="HostDB:ENSG00000132016"/>
<dbReference type="eggNOG" id="ENOG502SVQQ">
    <property type="taxonomic scope" value="Eukaryota"/>
</dbReference>
<dbReference type="GeneTree" id="ENSGT00390000016855"/>
<dbReference type="HOGENOM" id="CLU_029361_0_0_1"/>
<dbReference type="InParanoid" id="Q0VDD7"/>
<dbReference type="OMA" id="HETQEPT"/>
<dbReference type="OrthoDB" id="9940137at2759"/>
<dbReference type="PAN-GO" id="Q0VDD7">
    <property type="GO annotations" value="0 GO annotations based on evolutionary models"/>
</dbReference>
<dbReference type="PhylomeDB" id="Q0VDD7"/>
<dbReference type="TreeFam" id="TF337646"/>
<dbReference type="PathwayCommons" id="Q0VDD7"/>
<dbReference type="SignaLink" id="Q0VDD7"/>
<dbReference type="BioGRID-ORCS" id="79173">
    <property type="hits" value="7 hits in 1135 CRISPR screens"/>
</dbReference>
<dbReference type="ChiTaRS" id="C19orf57">
    <property type="organism name" value="human"/>
</dbReference>
<dbReference type="GenomeRNAi" id="79173"/>
<dbReference type="Pharos" id="Q0VDD7">
    <property type="development level" value="Tdark"/>
</dbReference>
<dbReference type="PRO" id="PR:Q0VDD7"/>
<dbReference type="Proteomes" id="UP000005640">
    <property type="component" value="Chromosome 19"/>
</dbReference>
<dbReference type="RNAct" id="Q0VDD7">
    <property type="molecule type" value="protein"/>
</dbReference>
<dbReference type="Bgee" id="ENSG00000132016">
    <property type="expression patterns" value="Expressed in right testis and 96 other cell types or tissues"/>
</dbReference>
<dbReference type="ExpressionAtlas" id="Q0VDD7">
    <property type="expression patterns" value="baseline and differential"/>
</dbReference>
<dbReference type="GO" id="GO:0005694">
    <property type="term" value="C:chromosome"/>
    <property type="evidence" value="ECO:0000250"/>
    <property type="project" value="UniProtKB"/>
</dbReference>
<dbReference type="GO" id="GO:1990918">
    <property type="term" value="P:double-strand break repair involved in meiotic recombination"/>
    <property type="evidence" value="ECO:0000250"/>
    <property type="project" value="UniProtKB"/>
</dbReference>
<dbReference type="GO" id="GO:0007144">
    <property type="term" value="P:female meiosis I"/>
    <property type="evidence" value="ECO:0000250"/>
    <property type="project" value="UniProtKB"/>
</dbReference>
<dbReference type="GO" id="GO:0007283">
    <property type="term" value="P:spermatogenesis"/>
    <property type="evidence" value="ECO:0000250"/>
    <property type="project" value="UniProtKB"/>
</dbReference>
<dbReference type="InterPro" id="IPR031441">
    <property type="entry name" value="Brme1"/>
</dbReference>
<dbReference type="PANTHER" id="PTHR14583:SF0">
    <property type="entry name" value="BREAK REPAIR MEIOTIC RECOMBINASE RECRUITMENT FACTOR 1"/>
    <property type="match status" value="1"/>
</dbReference>
<dbReference type="PANTHER" id="PTHR14583">
    <property type="entry name" value="UNCHARACTERIZED PROTEIN C19ORF57 FAMILY MEMBER"/>
    <property type="match status" value="1"/>
</dbReference>
<dbReference type="Pfam" id="PF15710">
    <property type="entry name" value="Brme1"/>
    <property type="match status" value="1"/>
</dbReference>
<organism>
    <name type="scientific">Homo sapiens</name>
    <name type="common">Human</name>
    <dbReference type="NCBI Taxonomy" id="9606"/>
    <lineage>
        <taxon>Eukaryota</taxon>
        <taxon>Metazoa</taxon>
        <taxon>Chordata</taxon>
        <taxon>Craniata</taxon>
        <taxon>Vertebrata</taxon>
        <taxon>Euteleostomi</taxon>
        <taxon>Mammalia</taxon>
        <taxon>Eutheria</taxon>
        <taxon>Euarchontoglires</taxon>
        <taxon>Primates</taxon>
        <taxon>Haplorrhini</taxon>
        <taxon>Catarrhini</taxon>
        <taxon>Hominidae</taxon>
        <taxon>Homo</taxon>
    </lineage>
</organism>
<evidence type="ECO:0000250" key="1">
    <source>
        <dbReference type="UniProtKB" id="Q6DIA7"/>
    </source>
</evidence>
<evidence type="ECO:0000256" key="2">
    <source>
        <dbReference type="SAM" id="MobiDB-lite"/>
    </source>
</evidence>
<evidence type="ECO:0000269" key="3">
    <source>
    </source>
</evidence>
<evidence type="ECO:0000303" key="4">
    <source>
    </source>
</evidence>
<evidence type="ECO:0000303" key="5">
    <source>
    </source>
</evidence>
<evidence type="ECO:0000305" key="6"/>
<evidence type="ECO:0000312" key="7">
    <source>
        <dbReference type="HGNC" id="HGNC:28153"/>
    </source>
</evidence>
<evidence type="ECO:0007744" key="8">
    <source>
    </source>
</evidence>
<evidence type="ECO:0007744" key="9">
    <source>
    </source>
</evidence>
<evidence type="ECO:0007829" key="10">
    <source>
        <dbReference type="PDB" id="8A51"/>
    </source>
</evidence>
<proteinExistence type="evidence at protein level"/>
<keyword id="KW-0002">3D-structure</keyword>
<keyword id="KW-0025">Alternative splicing</keyword>
<keyword id="KW-0158">Chromosome</keyword>
<keyword id="KW-0469">Meiosis</keyword>
<keyword id="KW-0597">Phosphoprotein</keyword>
<keyword id="KW-1267">Proteomics identification</keyword>
<keyword id="KW-1185">Reference proteome</keyword>
<protein>
    <recommendedName>
        <fullName evidence="6">Break repair meiotic recombinase recruitment factor 1</fullName>
    </recommendedName>
    <alternativeName>
        <fullName>Pre-T/NK cell-associated protein 3B3</fullName>
    </alternativeName>
</protein>